<gene>
    <name evidence="1" type="primary">dxs</name>
    <name type="ordered locus">HSM_1383</name>
</gene>
<keyword id="KW-0414">Isoprene biosynthesis</keyword>
<keyword id="KW-0460">Magnesium</keyword>
<keyword id="KW-0479">Metal-binding</keyword>
<keyword id="KW-0784">Thiamine biosynthesis</keyword>
<keyword id="KW-0786">Thiamine pyrophosphate</keyword>
<keyword id="KW-0808">Transferase</keyword>
<dbReference type="EC" id="2.2.1.7" evidence="1"/>
<dbReference type="EMBL" id="CP000947">
    <property type="protein sequence ID" value="ACA31122.1"/>
    <property type="molecule type" value="Genomic_DNA"/>
</dbReference>
<dbReference type="RefSeq" id="WP_012340534.1">
    <property type="nucleotide sequence ID" value="NC_010519.1"/>
</dbReference>
<dbReference type="SMR" id="B0UUA4"/>
<dbReference type="STRING" id="228400.HSM_1383"/>
<dbReference type="GeneID" id="31487681"/>
<dbReference type="KEGG" id="hsm:HSM_1383"/>
<dbReference type="HOGENOM" id="CLU_009227_1_4_6"/>
<dbReference type="UniPathway" id="UPA00064">
    <property type="reaction ID" value="UER00091"/>
</dbReference>
<dbReference type="GO" id="GO:0005829">
    <property type="term" value="C:cytosol"/>
    <property type="evidence" value="ECO:0007669"/>
    <property type="project" value="TreeGrafter"/>
</dbReference>
<dbReference type="GO" id="GO:0008661">
    <property type="term" value="F:1-deoxy-D-xylulose-5-phosphate synthase activity"/>
    <property type="evidence" value="ECO:0007669"/>
    <property type="project" value="UniProtKB-UniRule"/>
</dbReference>
<dbReference type="GO" id="GO:0000287">
    <property type="term" value="F:magnesium ion binding"/>
    <property type="evidence" value="ECO:0007669"/>
    <property type="project" value="UniProtKB-UniRule"/>
</dbReference>
<dbReference type="GO" id="GO:0030976">
    <property type="term" value="F:thiamine pyrophosphate binding"/>
    <property type="evidence" value="ECO:0007669"/>
    <property type="project" value="UniProtKB-UniRule"/>
</dbReference>
<dbReference type="GO" id="GO:0052865">
    <property type="term" value="P:1-deoxy-D-xylulose 5-phosphate biosynthetic process"/>
    <property type="evidence" value="ECO:0007669"/>
    <property type="project" value="UniProtKB-UniPathway"/>
</dbReference>
<dbReference type="GO" id="GO:0019288">
    <property type="term" value="P:isopentenyl diphosphate biosynthetic process, methylerythritol 4-phosphate pathway"/>
    <property type="evidence" value="ECO:0007669"/>
    <property type="project" value="TreeGrafter"/>
</dbReference>
<dbReference type="GO" id="GO:0016114">
    <property type="term" value="P:terpenoid biosynthetic process"/>
    <property type="evidence" value="ECO:0007669"/>
    <property type="project" value="UniProtKB-UniRule"/>
</dbReference>
<dbReference type="GO" id="GO:0009228">
    <property type="term" value="P:thiamine biosynthetic process"/>
    <property type="evidence" value="ECO:0007669"/>
    <property type="project" value="UniProtKB-UniRule"/>
</dbReference>
<dbReference type="CDD" id="cd02007">
    <property type="entry name" value="TPP_DXS"/>
    <property type="match status" value="1"/>
</dbReference>
<dbReference type="CDD" id="cd07033">
    <property type="entry name" value="TPP_PYR_DXS_TK_like"/>
    <property type="match status" value="1"/>
</dbReference>
<dbReference type="FunFam" id="3.40.50.920:FF:000002">
    <property type="entry name" value="1-deoxy-D-xylulose-5-phosphate synthase"/>
    <property type="match status" value="1"/>
</dbReference>
<dbReference type="FunFam" id="3.40.50.970:FF:000005">
    <property type="entry name" value="1-deoxy-D-xylulose-5-phosphate synthase"/>
    <property type="match status" value="1"/>
</dbReference>
<dbReference type="Gene3D" id="3.40.50.920">
    <property type="match status" value="1"/>
</dbReference>
<dbReference type="Gene3D" id="3.40.50.970">
    <property type="match status" value="2"/>
</dbReference>
<dbReference type="HAMAP" id="MF_00315">
    <property type="entry name" value="DXP_synth"/>
    <property type="match status" value="1"/>
</dbReference>
<dbReference type="InterPro" id="IPR005477">
    <property type="entry name" value="Dxylulose-5-P_synthase"/>
</dbReference>
<dbReference type="InterPro" id="IPR029061">
    <property type="entry name" value="THDP-binding"/>
</dbReference>
<dbReference type="InterPro" id="IPR009014">
    <property type="entry name" value="Transketo_C/PFOR_II"/>
</dbReference>
<dbReference type="InterPro" id="IPR005475">
    <property type="entry name" value="Transketolase-like_Pyr-bd"/>
</dbReference>
<dbReference type="InterPro" id="IPR020826">
    <property type="entry name" value="Transketolase_BS"/>
</dbReference>
<dbReference type="InterPro" id="IPR033248">
    <property type="entry name" value="Transketolase_C"/>
</dbReference>
<dbReference type="InterPro" id="IPR049557">
    <property type="entry name" value="Transketolase_CS"/>
</dbReference>
<dbReference type="NCBIfam" id="TIGR00204">
    <property type="entry name" value="dxs"/>
    <property type="match status" value="1"/>
</dbReference>
<dbReference type="NCBIfam" id="NF003933">
    <property type="entry name" value="PRK05444.2-2"/>
    <property type="match status" value="1"/>
</dbReference>
<dbReference type="PANTHER" id="PTHR43322">
    <property type="entry name" value="1-D-DEOXYXYLULOSE 5-PHOSPHATE SYNTHASE-RELATED"/>
    <property type="match status" value="1"/>
</dbReference>
<dbReference type="PANTHER" id="PTHR43322:SF5">
    <property type="entry name" value="1-DEOXY-D-XYLULOSE-5-PHOSPHATE SYNTHASE, CHLOROPLASTIC"/>
    <property type="match status" value="1"/>
</dbReference>
<dbReference type="Pfam" id="PF13292">
    <property type="entry name" value="DXP_synthase_N"/>
    <property type="match status" value="1"/>
</dbReference>
<dbReference type="Pfam" id="PF02779">
    <property type="entry name" value="Transket_pyr"/>
    <property type="match status" value="1"/>
</dbReference>
<dbReference type="Pfam" id="PF02780">
    <property type="entry name" value="Transketolase_C"/>
    <property type="match status" value="1"/>
</dbReference>
<dbReference type="SMART" id="SM00861">
    <property type="entry name" value="Transket_pyr"/>
    <property type="match status" value="1"/>
</dbReference>
<dbReference type="SUPFAM" id="SSF52518">
    <property type="entry name" value="Thiamin diphosphate-binding fold (THDP-binding)"/>
    <property type="match status" value="2"/>
</dbReference>
<dbReference type="SUPFAM" id="SSF52922">
    <property type="entry name" value="TK C-terminal domain-like"/>
    <property type="match status" value="1"/>
</dbReference>
<dbReference type="PROSITE" id="PS00801">
    <property type="entry name" value="TRANSKETOLASE_1"/>
    <property type="match status" value="1"/>
</dbReference>
<dbReference type="PROSITE" id="PS00802">
    <property type="entry name" value="TRANSKETOLASE_2"/>
    <property type="match status" value="1"/>
</dbReference>
<comment type="function">
    <text evidence="1">Catalyzes the acyloin condensation reaction between C atoms 2 and 3 of pyruvate and glyceraldehyde 3-phosphate to yield 1-deoxy-D-xylulose-5-phosphate (DXP).</text>
</comment>
<comment type="catalytic activity">
    <reaction evidence="1">
        <text>D-glyceraldehyde 3-phosphate + pyruvate + H(+) = 1-deoxy-D-xylulose 5-phosphate + CO2</text>
        <dbReference type="Rhea" id="RHEA:12605"/>
        <dbReference type="ChEBI" id="CHEBI:15361"/>
        <dbReference type="ChEBI" id="CHEBI:15378"/>
        <dbReference type="ChEBI" id="CHEBI:16526"/>
        <dbReference type="ChEBI" id="CHEBI:57792"/>
        <dbReference type="ChEBI" id="CHEBI:59776"/>
        <dbReference type="EC" id="2.2.1.7"/>
    </reaction>
</comment>
<comment type="cofactor">
    <cofactor evidence="1">
        <name>Mg(2+)</name>
        <dbReference type="ChEBI" id="CHEBI:18420"/>
    </cofactor>
    <text evidence="1">Binds 1 Mg(2+) ion per subunit.</text>
</comment>
<comment type="cofactor">
    <cofactor evidence="1">
        <name>thiamine diphosphate</name>
        <dbReference type="ChEBI" id="CHEBI:58937"/>
    </cofactor>
    <text evidence="1">Binds 1 thiamine pyrophosphate per subunit.</text>
</comment>
<comment type="pathway">
    <text evidence="1">Metabolic intermediate biosynthesis; 1-deoxy-D-xylulose 5-phosphate biosynthesis; 1-deoxy-D-xylulose 5-phosphate from D-glyceraldehyde 3-phosphate and pyruvate: step 1/1.</text>
</comment>
<comment type="subunit">
    <text evidence="1">Homodimer.</text>
</comment>
<comment type="similarity">
    <text evidence="1">Belongs to the transketolase family. DXPS subfamily.</text>
</comment>
<proteinExistence type="inferred from homology"/>
<sequence length="617" mass="67582">MNKYPLLSLINSPDDLRLLSKDKLPQLCQELRSYLLESVSQSSGHLASGLGTVELTVALHYVFKTPFDQLLWDVGHQAYPHKILTGRRDKMSTIRQKGGLHPFPWREESEFDVLSVGHSSTSISAGLGIAIAAQKENLGRKTICVIGDGAITAGMAFEALNHAGSVHTDMLVILNDNEMSISENVGALNNHLARLLSGSIYSTLRESGKKILSGLPPIKEFVKKTEEHVKGFVSPVGTLFEQLGFNYIGPIDGHNIHELISTLKNMQSLSGPQFLHIKTKKGKGYAPAEKDPIGFHGVPKFDHKLGELPKSSTTPTYSQIFGSWLCEIAAQDEKLIGITPAMREGSGMVEFSQQFPQQYFDVAIAEQHAVTFAAGLAIAGYKPVVAIYSTFLQRAYDQLIHDVAIQNLPVLFAIDRAGIVGADGQTHQGAFDLSFMRCIPNLVIMTPSNENECRQMLYTGYKCGKPAAVRYPRGNAIGVKLEPLAELPLGKSKLIRQGKNIAILNFGTLLSEATKVAEDLDATVVDMRFVKPLDTQRIQEIAQTHSLIVTLEENAIQGGAGSAVAETLYQQQQKVSLLQLGLPDNFIPQGTQKEMLAELKLNAEGIFEQIKQFLQKI</sequence>
<evidence type="ECO:0000255" key="1">
    <source>
        <dbReference type="HAMAP-Rule" id="MF_00315"/>
    </source>
</evidence>
<protein>
    <recommendedName>
        <fullName evidence="1">1-deoxy-D-xylulose-5-phosphate synthase</fullName>
        <ecNumber evidence="1">2.2.1.7</ecNumber>
    </recommendedName>
    <alternativeName>
        <fullName evidence="1">1-deoxyxylulose-5-phosphate synthase</fullName>
        <shortName evidence="1">DXP synthase</shortName>
        <shortName evidence="1">DXPS</shortName>
    </alternativeName>
</protein>
<name>DXS_HISS2</name>
<organism>
    <name type="scientific">Histophilus somni (strain 2336)</name>
    <name type="common">Haemophilus somnus</name>
    <dbReference type="NCBI Taxonomy" id="228400"/>
    <lineage>
        <taxon>Bacteria</taxon>
        <taxon>Pseudomonadati</taxon>
        <taxon>Pseudomonadota</taxon>
        <taxon>Gammaproteobacteria</taxon>
        <taxon>Pasteurellales</taxon>
        <taxon>Pasteurellaceae</taxon>
        <taxon>Histophilus</taxon>
    </lineage>
</organism>
<accession>B0UUA4</accession>
<feature type="chain" id="PRO_1000079092" description="1-deoxy-D-xylulose-5-phosphate synthase">
    <location>
        <begin position="1"/>
        <end position="617"/>
    </location>
</feature>
<feature type="binding site" evidence="1">
    <location>
        <position position="76"/>
    </location>
    <ligand>
        <name>thiamine diphosphate</name>
        <dbReference type="ChEBI" id="CHEBI:58937"/>
    </ligand>
</feature>
<feature type="binding site" evidence="1">
    <location>
        <begin position="117"/>
        <end position="119"/>
    </location>
    <ligand>
        <name>thiamine diphosphate</name>
        <dbReference type="ChEBI" id="CHEBI:58937"/>
    </ligand>
</feature>
<feature type="binding site" evidence="1">
    <location>
        <position position="148"/>
    </location>
    <ligand>
        <name>Mg(2+)</name>
        <dbReference type="ChEBI" id="CHEBI:18420"/>
    </ligand>
</feature>
<feature type="binding site" evidence="1">
    <location>
        <begin position="149"/>
        <end position="150"/>
    </location>
    <ligand>
        <name>thiamine diphosphate</name>
        <dbReference type="ChEBI" id="CHEBI:58937"/>
    </ligand>
</feature>
<feature type="binding site" evidence="1">
    <location>
        <position position="177"/>
    </location>
    <ligand>
        <name>Mg(2+)</name>
        <dbReference type="ChEBI" id="CHEBI:18420"/>
    </ligand>
</feature>
<feature type="binding site" evidence="1">
    <location>
        <position position="177"/>
    </location>
    <ligand>
        <name>thiamine diphosphate</name>
        <dbReference type="ChEBI" id="CHEBI:58937"/>
    </ligand>
</feature>
<feature type="binding site" evidence="1">
    <location>
        <position position="285"/>
    </location>
    <ligand>
        <name>thiamine diphosphate</name>
        <dbReference type="ChEBI" id="CHEBI:58937"/>
    </ligand>
</feature>
<feature type="binding site" evidence="1">
    <location>
        <position position="366"/>
    </location>
    <ligand>
        <name>thiamine diphosphate</name>
        <dbReference type="ChEBI" id="CHEBI:58937"/>
    </ligand>
</feature>
<reference key="1">
    <citation type="submission" date="2008-02" db="EMBL/GenBank/DDBJ databases">
        <title>Complete sequence of Haemophilus somnus 2336.</title>
        <authorList>
            <consortium name="US DOE Joint Genome Institute"/>
            <person name="Siddaramappa S."/>
            <person name="Duncan A.J."/>
            <person name="Challacombe J.F."/>
            <person name="Rainey D."/>
            <person name="Gillaspy A.F."/>
            <person name="Carson M."/>
            <person name="Gipson J."/>
            <person name="Gipson M."/>
            <person name="Bruce D."/>
            <person name="Detter J.C."/>
            <person name="Han C.S."/>
            <person name="Land M."/>
            <person name="Tapia R."/>
            <person name="Thompson L.S."/>
            <person name="Orvis J."/>
            <person name="Zaitshik J."/>
            <person name="Barnes G."/>
            <person name="Brettin T.S."/>
            <person name="Dyer D.W."/>
            <person name="Inzana T.J."/>
        </authorList>
    </citation>
    <scope>NUCLEOTIDE SEQUENCE [LARGE SCALE GENOMIC DNA]</scope>
    <source>
        <strain>2336</strain>
    </source>
</reference>